<dbReference type="EMBL" id="CP001083">
    <property type="protein sequence ID" value="ACQ53110.1"/>
    <property type="molecule type" value="Genomic_DNA"/>
</dbReference>
<dbReference type="RefSeq" id="WP_003362485.1">
    <property type="nucleotide sequence ID" value="NC_012658.1"/>
</dbReference>
<dbReference type="SMR" id="C3KX86"/>
<dbReference type="KEGG" id="cbi:CLJ_B2029"/>
<dbReference type="HOGENOM" id="CLU_045647_5_3_9"/>
<dbReference type="Proteomes" id="UP000002333">
    <property type="component" value="Chromosome"/>
</dbReference>
<dbReference type="GO" id="GO:0005737">
    <property type="term" value="C:cytoplasm"/>
    <property type="evidence" value="ECO:0007669"/>
    <property type="project" value="UniProtKB-SubCell"/>
</dbReference>
<dbReference type="GO" id="GO:0051301">
    <property type="term" value="P:cell division"/>
    <property type="evidence" value="ECO:0007669"/>
    <property type="project" value="UniProtKB-KW"/>
</dbReference>
<dbReference type="GO" id="GO:0051304">
    <property type="term" value="P:chromosome separation"/>
    <property type="evidence" value="ECO:0007669"/>
    <property type="project" value="InterPro"/>
</dbReference>
<dbReference type="GO" id="GO:0006260">
    <property type="term" value="P:DNA replication"/>
    <property type="evidence" value="ECO:0007669"/>
    <property type="project" value="UniProtKB-UniRule"/>
</dbReference>
<dbReference type="Gene3D" id="1.10.10.10">
    <property type="entry name" value="Winged helix-like DNA-binding domain superfamily/Winged helix DNA-binding domain"/>
    <property type="match status" value="2"/>
</dbReference>
<dbReference type="HAMAP" id="MF_01804">
    <property type="entry name" value="ScpB"/>
    <property type="match status" value="1"/>
</dbReference>
<dbReference type="InterPro" id="IPR005234">
    <property type="entry name" value="ScpB_csome_segregation"/>
</dbReference>
<dbReference type="InterPro" id="IPR036388">
    <property type="entry name" value="WH-like_DNA-bd_sf"/>
</dbReference>
<dbReference type="InterPro" id="IPR036390">
    <property type="entry name" value="WH_DNA-bd_sf"/>
</dbReference>
<dbReference type="NCBIfam" id="TIGR00281">
    <property type="entry name" value="SMC-Scp complex subunit ScpB"/>
    <property type="match status" value="1"/>
</dbReference>
<dbReference type="PANTHER" id="PTHR34298">
    <property type="entry name" value="SEGREGATION AND CONDENSATION PROTEIN B"/>
    <property type="match status" value="1"/>
</dbReference>
<dbReference type="PANTHER" id="PTHR34298:SF2">
    <property type="entry name" value="SEGREGATION AND CONDENSATION PROTEIN B"/>
    <property type="match status" value="1"/>
</dbReference>
<dbReference type="Pfam" id="PF04079">
    <property type="entry name" value="SMC_ScpB"/>
    <property type="match status" value="1"/>
</dbReference>
<dbReference type="PIRSF" id="PIRSF019345">
    <property type="entry name" value="ScpB"/>
    <property type="match status" value="1"/>
</dbReference>
<dbReference type="SUPFAM" id="SSF46785">
    <property type="entry name" value="Winged helix' DNA-binding domain"/>
    <property type="match status" value="2"/>
</dbReference>
<proteinExistence type="inferred from homology"/>
<organism>
    <name type="scientific">Clostridium botulinum (strain 657 / Type Ba4)</name>
    <dbReference type="NCBI Taxonomy" id="515621"/>
    <lineage>
        <taxon>Bacteria</taxon>
        <taxon>Bacillati</taxon>
        <taxon>Bacillota</taxon>
        <taxon>Clostridia</taxon>
        <taxon>Eubacteriales</taxon>
        <taxon>Clostridiaceae</taxon>
        <taxon>Clostridium</taxon>
    </lineage>
</organism>
<accession>C3KX86</accession>
<protein>
    <recommendedName>
        <fullName evidence="1">Segregation and condensation protein B</fullName>
    </recommendedName>
</protein>
<feature type="chain" id="PRO_1000215941" description="Segregation and condensation protein B">
    <location>
        <begin position="1"/>
        <end position="193"/>
    </location>
</feature>
<evidence type="ECO:0000255" key="1">
    <source>
        <dbReference type="HAMAP-Rule" id="MF_01804"/>
    </source>
</evidence>
<comment type="function">
    <text evidence="1">Participates in chromosomal partition during cell division. May act via the formation of a condensin-like complex containing Smc and ScpA that pull DNA away from mid-cell into both cell halves.</text>
</comment>
<comment type="subunit">
    <text evidence="1">Homodimer. Homodimerization may be required to stabilize the binding of ScpA to the Smc head domains. Component of a cohesin-like complex composed of ScpA, ScpB and the Smc homodimer, in which ScpA and ScpB bind to the head domain of Smc. The presence of the three proteins is required for the association of the complex with DNA.</text>
</comment>
<comment type="subcellular location">
    <subcellularLocation>
        <location evidence="1">Cytoplasm</location>
    </subcellularLocation>
    <text evidence="1">Associated with two foci at the outer edges of the nucleoid region in young cells, and at four foci within both cell halves in older cells.</text>
</comment>
<comment type="similarity">
    <text evidence="1">Belongs to the ScpB family.</text>
</comment>
<name>SCPB_CLOB6</name>
<keyword id="KW-0131">Cell cycle</keyword>
<keyword id="KW-0132">Cell division</keyword>
<keyword id="KW-0159">Chromosome partition</keyword>
<keyword id="KW-0963">Cytoplasm</keyword>
<sequence length="193" mass="21996">MNKDHEEQLEINEVSQKNKYKSIIESLLFMSGEPINIKDLATILNCKQDKVSSLLNEMKNSYVGKDRGIKILIHNRAVQLVTKPENSIYVEKLLKTNVRQSLSQAALETLSIIAYKQPITRVAIDEIRGVKSDRAIYTLLEKNIIKECGRLDVPGKPILYGTTEEFLKFFGLDSIEAIPNLEDLLKEFSKEEN</sequence>
<reference key="1">
    <citation type="submission" date="2008-05" db="EMBL/GenBank/DDBJ databases">
        <title>Genome sequence of Clostridium botulinum Ba4 strain 657.</title>
        <authorList>
            <person name="Shrivastava S."/>
            <person name="Brown J.L."/>
            <person name="Bruce D."/>
            <person name="Detter C."/>
            <person name="Munk C."/>
            <person name="Smith L.A."/>
            <person name="Smith T.J."/>
            <person name="Sutton G."/>
            <person name="Brettin T.S."/>
        </authorList>
    </citation>
    <scope>NUCLEOTIDE SEQUENCE [LARGE SCALE GENOMIC DNA]</scope>
    <source>
        <strain>657 / Type Ba4</strain>
    </source>
</reference>
<gene>
    <name evidence="1" type="primary">scpB</name>
    <name type="ordered locus">CLJ_B2029</name>
</gene>